<name>TRPC_METTM</name>
<feature type="chain" id="PRO_0000154295" description="Indole-3-glycerol phosphate synthase">
    <location>
        <begin position="1"/>
        <end position="274"/>
    </location>
</feature>
<evidence type="ECO:0000305" key="1"/>
<comment type="catalytic activity">
    <reaction>
        <text>1-(2-carboxyphenylamino)-1-deoxy-D-ribulose 5-phosphate + H(+) = (1S,2R)-1-C-(indol-3-yl)glycerol 3-phosphate + CO2 + H2O</text>
        <dbReference type="Rhea" id="RHEA:23476"/>
        <dbReference type="ChEBI" id="CHEBI:15377"/>
        <dbReference type="ChEBI" id="CHEBI:15378"/>
        <dbReference type="ChEBI" id="CHEBI:16526"/>
        <dbReference type="ChEBI" id="CHEBI:58613"/>
        <dbReference type="ChEBI" id="CHEBI:58866"/>
        <dbReference type="EC" id="4.1.1.48"/>
    </reaction>
</comment>
<comment type="pathway">
    <text>Amino-acid biosynthesis; L-tryptophan biosynthesis; L-tryptophan from chorismate: step 4/5.</text>
</comment>
<comment type="similarity">
    <text evidence="1">Belongs to the TrpC family.</text>
</comment>
<accession>P26939</accession>
<accession>D9PUE7</accession>
<reference key="1">
    <citation type="journal article" date="1991" name="J. Bacteriol.">
        <title>Tryptophan gene cluster of Methanobacterium thermoautotrophicum Marburg: molecular cloning and nucleotide sequence of a putative trpEGCFBAD operon.</title>
        <authorList>
            <person name="Meile L."/>
            <person name="Stettler R."/>
            <person name="Banholzer R."/>
            <person name="Kotik M."/>
            <person name="Leisinger T."/>
        </authorList>
    </citation>
    <scope>NUCLEOTIDE SEQUENCE [GENOMIC DNA]</scope>
    <source>
        <strain>ATCC BAA-927 / DSM 2133 / JCM 14651 / NBRC 100331 / OCM 82 / Marburg</strain>
    </source>
</reference>
<reference key="2">
    <citation type="journal article" date="2010" name="J. Bacteriol.">
        <title>Complete genome sequence of Methanothermobacter marburgensis, a methanoarchaeon model organism.</title>
        <authorList>
            <person name="Liesegang H."/>
            <person name="Kaster A.K."/>
            <person name="Wiezer A."/>
            <person name="Goenrich M."/>
            <person name="Wollherr A."/>
            <person name="Seedorf H."/>
            <person name="Gottschalk G."/>
            <person name="Thauer R.K."/>
        </authorList>
    </citation>
    <scope>NUCLEOTIDE SEQUENCE [LARGE SCALE GENOMIC DNA]</scope>
    <source>
        <strain>ATCC BAA-927 / DSM 2133 / JCM 14651 / NBRC 100331 / OCM 82 / Marburg</strain>
    </source>
</reference>
<protein>
    <recommendedName>
        <fullName>Indole-3-glycerol phosphate synthase</fullName>
        <shortName>IGPS</shortName>
        <ecNumber>4.1.1.48</ecNumber>
    </recommendedName>
</protein>
<gene>
    <name type="primary">trpC</name>
    <name type="ordered locus">MTBMA_c02360</name>
</gene>
<keyword id="KW-0028">Amino-acid biosynthesis</keyword>
<keyword id="KW-0057">Aromatic amino acid biosynthesis</keyword>
<keyword id="KW-0210">Decarboxylase</keyword>
<keyword id="KW-0456">Lyase</keyword>
<keyword id="KW-0822">Tryptophan biosynthesis</keyword>
<proteinExistence type="inferred from homology"/>
<dbReference type="EC" id="4.1.1.48"/>
<dbReference type="EMBL" id="M65060">
    <property type="protein sequence ID" value="AAA73030.1"/>
    <property type="molecule type" value="Genomic_DNA"/>
</dbReference>
<dbReference type="EMBL" id="CP001710">
    <property type="protein sequence ID" value="ADL57845.1"/>
    <property type="molecule type" value="Genomic_DNA"/>
</dbReference>
<dbReference type="RefSeq" id="WP_013295072.1">
    <property type="nucleotide sequence ID" value="NC_014408.1"/>
</dbReference>
<dbReference type="SMR" id="P26939"/>
<dbReference type="STRING" id="79929.MTBMA_c02360"/>
<dbReference type="PaxDb" id="79929-MTBMA_c02360"/>
<dbReference type="GeneID" id="43708264"/>
<dbReference type="GeneID" id="9703942"/>
<dbReference type="KEGG" id="mmg:MTBMA_c02360"/>
<dbReference type="PATRIC" id="fig|79929.8.peg.232"/>
<dbReference type="HOGENOM" id="CLU_034247_0_1_2"/>
<dbReference type="OrthoDB" id="15223at2157"/>
<dbReference type="UniPathway" id="UPA00035">
    <property type="reaction ID" value="UER00043"/>
</dbReference>
<dbReference type="Proteomes" id="UP000000345">
    <property type="component" value="Chromosome"/>
</dbReference>
<dbReference type="GO" id="GO:0004425">
    <property type="term" value="F:indole-3-glycerol-phosphate synthase activity"/>
    <property type="evidence" value="ECO:0007669"/>
    <property type="project" value="UniProtKB-UniRule"/>
</dbReference>
<dbReference type="GO" id="GO:0004640">
    <property type="term" value="F:phosphoribosylanthranilate isomerase activity"/>
    <property type="evidence" value="ECO:0007669"/>
    <property type="project" value="TreeGrafter"/>
</dbReference>
<dbReference type="GO" id="GO:0000162">
    <property type="term" value="P:L-tryptophan biosynthetic process"/>
    <property type="evidence" value="ECO:0007669"/>
    <property type="project" value="UniProtKB-UniRule"/>
</dbReference>
<dbReference type="CDD" id="cd00331">
    <property type="entry name" value="IGPS"/>
    <property type="match status" value="1"/>
</dbReference>
<dbReference type="Gene3D" id="3.20.20.70">
    <property type="entry name" value="Aldolase class I"/>
    <property type="match status" value="1"/>
</dbReference>
<dbReference type="HAMAP" id="MF_00134_A">
    <property type="entry name" value="IGPS_A"/>
    <property type="match status" value="1"/>
</dbReference>
<dbReference type="InterPro" id="IPR013785">
    <property type="entry name" value="Aldolase_TIM"/>
</dbReference>
<dbReference type="InterPro" id="IPR045186">
    <property type="entry name" value="Indole-3-glycerol_P_synth"/>
</dbReference>
<dbReference type="InterPro" id="IPR013798">
    <property type="entry name" value="Indole-3-glycerol_P_synth_dom"/>
</dbReference>
<dbReference type="InterPro" id="IPR001468">
    <property type="entry name" value="Indole-3-GlycerolPSynthase_CS"/>
</dbReference>
<dbReference type="InterPro" id="IPR011060">
    <property type="entry name" value="RibuloseP-bd_barrel"/>
</dbReference>
<dbReference type="PANTHER" id="PTHR22854:SF2">
    <property type="entry name" value="INDOLE-3-GLYCEROL-PHOSPHATE SYNTHASE"/>
    <property type="match status" value="1"/>
</dbReference>
<dbReference type="PANTHER" id="PTHR22854">
    <property type="entry name" value="TRYPTOPHAN BIOSYNTHESIS PROTEIN"/>
    <property type="match status" value="1"/>
</dbReference>
<dbReference type="Pfam" id="PF00218">
    <property type="entry name" value="IGPS"/>
    <property type="match status" value="1"/>
</dbReference>
<dbReference type="SUPFAM" id="SSF51366">
    <property type="entry name" value="Ribulose-phoshate binding barrel"/>
    <property type="match status" value="1"/>
</dbReference>
<dbReference type="PROSITE" id="PS00614">
    <property type="entry name" value="IGPS"/>
    <property type="match status" value="1"/>
</dbReference>
<sequence>MSILQEIIRSRKLEIKNLSRKKPLEELRDELTSLDEPLSFTDALTGNRVSLICEYKRASPSSGRTYGRGLHEMMEVYREGADAVSVITENRYFHGSIEFLREASEYGIPLLMKDFVVDEYQIYQARASGASSVLIITGVFPDLESGIETCRELSMEPLVECHSAIDIYRAIEAGAELIGVNNRNLETLEVDLERTRALAPLVPDELLLVSESGVMGPEDAEILAGCGADALLIGTSLMLASDPRELLDEIMAAVKSCKPGRKRYSGDEFFEQFA</sequence>
<organism>
    <name type="scientific">Methanothermobacter marburgensis (strain ATCC BAA-927 / DSM 2133 / JCM 14651 / NBRC 100331 / OCM 82 / Marburg)</name>
    <name type="common">Methanobacterium thermoautotrophicum</name>
    <dbReference type="NCBI Taxonomy" id="79929"/>
    <lineage>
        <taxon>Archaea</taxon>
        <taxon>Methanobacteriati</taxon>
        <taxon>Methanobacteriota</taxon>
        <taxon>Methanomada group</taxon>
        <taxon>Methanobacteria</taxon>
        <taxon>Methanobacteriales</taxon>
        <taxon>Methanobacteriaceae</taxon>
        <taxon>Methanothermobacter</taxon>
    </lineage>
</organism>